<gene>
    <name type="primary">Taok2</name>
    <name type="synonym">Kiaa0881</name>
</gene>
<keyword id="KW-0025">Alternative splicing</keyword>
<keyword id="KW-0067">ATP-binding</keyword>
<keyword id="KW-0966">Cell projection</keyword>
<keyword id="KW-0175">Coiled coil</keyword>
<keyword id="KW-0963">Cytoplasm</keyword>
<keyword id="KW-0968">Cytoplasmic vesicle</keyword>
<keyword id="KW-0206">Cytoskeleton</keyword>
<keyword id="KW-0418">Kinase</keyword>
<keyword id="KW-0460">Magnesium</keyword>
<keyword id="KW-0472">Membrane</keyword>
<keyword id="KW-0488">Methylation</keyword>
<keyword id="KW-0547">Nucleotide-binding</keyword>
<keyword id="KW-0597">Phosphoprotein</keyword>
<keyword id="KW-1185">Reference proteome</keyword>
<keyword id="KW-0723">Serine/threonine-protein kinase</keyword>
<keyword id="KW-0808">Transferase</keyword>
<keyword id="KW-0812">Transmembrane</keyword>
<keyword id="KW-1133">Transmembrane helix</keyword>
<comment type="function">
    <text evidence="1">Serine/threonine-protein kinase involved in different processes such as membrane blebbing and apoptotic bodies formation DNA damage response and MAPK14/p38 MAPK stress-activated MAPK cascade. Phosphorylates itself, MBP, activated MAPK8, MAP2K3, MAP2K6 and tubulins. Activates the MAPK14/p38 MAPK signaling pathway through the specific activation and phosphorylation of the upstream MAP2K3 and MAP2K6 kinases. In response to DNA damage, involved in the G2/M transition DNA damage checkpoint by activating the p38/MAPK14 stress-activated MAPK cascade, probably by mediating phosphorylation of upstream MAP2K3 and MAP2K6 kinases. May affect microtubule organization and stability. May play a role in the osmotic stress-MAPK8 pathway. Prevents MAP3K7-mediated activation of CHUK, and thus NF-kappa-B activation. Isoform 2, but not isoform 1, is required for PCDH8 endocytosis. Following homophilic interactions between PCDH8 extracellular domains, isoform 2 phosphorylates and activates MAPK14/p38 MAPK which in turn phosphorylates isoform 2. This process leads to PCDH8 endocytosis and CDH2 cointernalization. Both isoforms are involved in MAPK14/p38 MAPK activation (By similarity).</text>
</comment>
<comment type="catalytic activity">
    <reaction>
        <text>L-seryl-[protein] + ATP = O-phospho-L-seryl-[protein] + ADP + H(+)</text>
        <dbReference type="Rhea" id="RHEA:17989"/>
        <dbReference type="Rhea" id="RHEA-COMP:9863"/>
        <dbReference type="Rhea" id="RHEA-COMP:11604"/>
        <dbReference type="ChEBI" id="CHEBI:15378"/>
        <dbReference type="ChEBI" id="CHEBI:29999"/>
        <dbReference type="ChEBI" id="CHEBI:30616"/>
        <dbReference type="ChEBI" id="CHEBI:83421"/>
        <dbReference type="ChEBI" id="CHEBI:456216"/>
        <dbReference type="EC" id="2.7.11.1"/>
    </reaction>
</comment>
<comment type="catalytic activity">
    <reaction>
        <text>L-threonyl-[protein] + ATP = O-phospho-L-threonyl-[protein] + ADP + H(+)</text>
        <dbReference type="Rhea" id="RHEA:46608"/>
        <dbReference type="Rhea" id="RHEA-COMP:11060"/>
        <dbReference type="Rhea" id="RHEA-COMP:11605"/>
        <dbReference type="ChEBI" id="CHEBI:15378"/>
        <dbReference type="ChEBI" id="CHEBI:30013"/>
        <dbReference type="ChEBI" id="CHEBI:30616"/>
        <dbReference type="ChEBI" id="CHEBI:61977"/>
        <dbReference type="ChEBI" id="CHEBI:456216"/>
        <dbReference type="EC" id="2.7.11.1"/>
    </reaction>
</comment>
<comment type="cofactor">
    <cofactor evidence="1">
        <name>Mg(2+)</name>
        <dbReference type="ChEBI" id="CHEBI:18420"/>
    </cofactor>
</comment>
<comment type="subunit">
    <text evidence="1">Interacts with MAP2K3 and MAP2K6 (By similarity). Self-associates. Interacts with tubulins. Interacts with MAP3K7 and interferes with MAP3K7-binding to CHUK and thus prevents NF-kappa-B activation (By similarity). Isoform 2 interacts with PCDH8; this complex may also include CDH2 (By similarity).</text>
</comment>
<comment type="subcellular location">
    <subcellularLocation>
        <location evidence="1">Cytoplasmic vesicle membrane</location>
        <topology evidence="1">Multi-pass membrane protein</topology>
    </subcellularLocation>
    <subcellularLocation>
        <location evidence="1">Cytoplasm</location>
        <location evidence="1">Cytoskeleton</location>
    </subcellularLocation>
    <text evidence="1">Found to be perinuclear and localized to vesicular compartment.</text>
</comment>
<comment type="subcellular location">
    <molecule>Isoform 2</molecule>
    <subcellularLocation>
        <location evidence="1">Cell projection</location>
        <location evidence="1">Dendrite</location>
    </subcellularLocation>
    <text evidence="1">In dendrites, colocalizes with PCDH8.</text>
</comment>
<comment type="alternative products">
    <event type="alternative splicing"/>
    <isoform>
        <id>Q6ZQ29-1</id>
        <name>1</name>
        <sequence type="displayed"/>
    </isoform>
    <isoform>
        <id>Q6ZQ29-2</id>
        <name>2</name>
        <sequence type="described" ref="VSP_040543 VSP_040544"/>
    </isoform>
</comment>
<comment type="PTM">
    <text evidence="1">Autophosphorylated. Phosphorylated by ATM (By similarity).</text>
</comment>
<comment type="PTM">
    <molecule>Isoform 2</molecule>
    <text evidence="1">Phosphorylated on Ser-1037 by MAPK14. This phosphorylation is required PCDH8 for endocytosis (By similarity).</text>
</comment>
<comment type="similarity">
    <text evidence="8">Belongs to the protein kinase superfamily. STE Ser/Thr protein kinase family. STE20 subfamily.</text>
</comment>
<comment type="sequence caution" evidence="8">
    <conflict type="miscellaneous discrepancy">
        <sequence resource="EMBL-CDS" id="AAH52933"/>
    </conflict>
    <text>Contaminating sequence. Sequence of unknown origin in the N- and C-terminal parts.</text>
</comment>
<comment type="sequence caution" evidence="8">
    <conflict type="erroneous initiation">
        <sequence resource="EMBL-CDS" id="BAC98045"/>
    </conflict>
    <text>Extended N-terminus.</text>
</comment>
<sequence>MPAGGRAGSLKDPDVAELFFKDDPEKLFSDLREIGHGSFGAVYFARDVRNSEVVAIKKMSYSGKQSNEKWQDIIKEVRFLQKLRHPNTIQYRGCYLREHTAWLVMEYCLGSASDLLEVHKKPLQEVEIAAVTHGALQGLAYLHSHNMIHRDVKAGNILLSEPGLVKLGDFGSASIMAPANSFVGTPYWMAPEVILAMDEGQYDGKVDVWSLGITCIELAERKPPLFNMNAMSALYHIAQNESPALQSGHWSEYFRNFVDSCLQKIPQDRPTSEVLLKHRFVLRERPPTVIMDLIQRTKDAVRELDNLQYRKMKKILFQEAPNGPGAEAPEEEELTPCSQEAEPYTHRAGTLTSLESSHSVPSMSISASSQSSSVNSLADASDNEEEEEEEEEEEEEEEEEGPESREMAMMQEGEHTVTSHSSIIHRLPGSDNLYDDPYQPEMTPGPLQPPAAPPTSTSSSARRRAYCRNRDHFATIRTASLVSRQIQEHEQDSALREQLSGYKRMRRQHQKQLLALESRLRGEREEHSGRLQRELEAQRAGFGTEAEKLARRHQAIGEKEARAAQAEERKFQQHILGQQKKELAALLEAQKRTYKLRKEQLKEELQENPSTPKREKAEWLLRQKEQLQQCQAEEEAGLLRRQRQYFELQCRQYKRKMLLARHSLDQDLLREDLNKKQTQKDLECALLLRQHEATRELELRQLQAVQRTRAELTRLQHQTELGNQLEYNKRREQELRQKHAAQVRQQPKSLKVRAGQLPMGLPATGALGPLSTGTPSEEQPCSSGQEAILDQRMLGEEEEAVPERRILGKEGTTLEPEEQRILGEEMGTFSSSPQKHRSLANEEDWDISEEMKEIRVPSLASQERNIIGQEEAAAWSLWEKEGGNLVDVEFKLGWVQGPVLTPVPEEEEEEEEEGGAPIGTHRDPGDGCPSPDIPPEPPPSHLRQYPTSQLPGLLSHGLLAGLSFAVGSSSGLLPLLLLLLLPLLAAQGGGGLQAALLALEVGLVGLGASYLFLCTALHLPPGLFLLLAQGTALLAVLSLSWRRGLMGVPLGLGAAWLLAWPSLALPLAAMAAGGKWVRQQGPQMRRGISRLWLRILLRLSPMVFRALQGCGAVGDRGLFALYPKTNKNGFRSRLPVPWPRQGNPRTTQHPLAQLTRVWAVCKGWNWRLARASHRLASCLPPWAVHILASWGLLKGERPSRIPRLLPRSQRRLGLSASRQLPPGTVAGRRSQTRRTLPPWR</sequence>
<evidence type="ECO:0000250" key="1"/>
<evidence type="ECO:0000250" key="2">
    <source>
        <dbReference type="UniProtKB" id="Q9UL54"/>
    </source>
</evidence>
<evidence type="ECO:0000255" key="3"/>
<evidence type="ECO:0000255" key="4">
    <source>
        <dbReference type="PROSITE-ProRule" id="PRU00159"/>
    </source>
</evidence>
<evidence type="ECO:0000255" key="5">
    <source>
        <dbReference type="PROSITE-ProRule" id="PRU10027"/>
    </source>
</evidence>
<evidence type="ECO:0000256" key="6">
    <source>
        <dbReference type="SAM" id="MobiDB-lite"/>
    </source>
</evidence>
<evidence type="ECO:0000303" key="7">
    <source>
    </source>
</evidence>
<evidence type="ECO:0000305" key="8"/>
<evidence type="ECO:0007744" key="9">
    <source>
    </source>
</evidence>
<evidence type="ECO:0007744" key="10">
    <source>
    </source>
</evidence>
<name>TAOK2_MOUSE</name>
<feature type="chain" id="PRO_0000086734" description="Serine/threonine-protein kinase TAO2">
    <location>
        <begin position="1"/>
        <end position="1240"/>
    </location>
</feature>
<feature type="transmembrane region" description="Helical" evidence="3">
    <location>
        <begin position="972"/>
        <end position="992"/>
    </location>
</feature>
<feature type="transmembrane region" description="Helical" evidence="3">
    <location>
        <begin position="994"/>
        <end position="1014"/>
    </location>
</feature>
<feature type="transmembrane region" description="Helical" evidence="3">
    <location>
        <begin position="1019"/>
        <end position="1039"/>
    </location>
</feature>
<feature type="transmembrane region" description="Helical" evidence="3">
    <location>
        <begin position="1045"/>
        <end position="1065"/>
    </location>
</feature>
<feature type="transmembrane region" description="Helical" evidence="3">
    <location>
        <begin position="1175"/>
        <end position="1195"/>
    </location>
</feature>
<feature type="domain" description="Protein kinase" evidence="4">
    <location>
        <begin position="28"/>
        <end position="281"/>
    </location>
</feature>
<feature type="region of interest" description="Disordered" evidence="6">
    <location>
        <begin position="320"/>
        <end position="463"/>
    </location>
</feature>
<feature type="region of interest" description="Disordered" evidence="6">
    <location>
        <begin position="899"/>
        <end position="946"/>
    </location>
</feature>
<feature type="region of interest" description="Disordered" evidence="6">
    <location>
        <begin position="1212"/>
        <end position="1240"/>
    </location>
</feature>
<feature type="coiled-coil region" evidence="3">
    <location>
        <begin position="493"/>
        <end position="528"/>
    </location>
</feature>
<feature type="coiled-coil region" evidence="3">
    <location>
        <begin position="581"/>
        <end position="608"/>
    </location>
</feature>
<feature type="coiled-coil region" evidence="3">
    <location>
        <begin position="688"/>
        <end position="720"/>
    </location>
</feature>
<feature type="coiled-coil region" evidence="3">
    <location>
        <begin position="805"/>
        <end position="934"/>
    </location>
</feature>
<feature type="compositionally biased region" description="Low complexity" evidence="6">
    <location>
        <begin position="356"/>
        <end position="380"/>
    </location>
</feature>
<feature type="compositionally biased region" description="Acidic residues" evidence="6">
    <location>
        <begin position="381"/>
        <end position="401"/>
    </location>
</feature>
<feature type="compositionally biased region" description="Basic and acidic residues" evidence="6">
    <location>
        <begin position="402"/>
        <end position="417"/>
    </location>
</feature>
<feature type="compositionally biased region" description="Acidic residues" evidence="6">
    <location>
        <begin position="904"/>
        <end position="914"/>
    </location>
</feature>
<feature type="compositionally biased region" description="Pro residues" evidence="6">
    <location>
        <begin position="931"/>
        <end position="940"/>
    </location>
</feature>
<feature type="active site" description="Proton acceptor" evidence="4 5">
    <location>
        <position position="151"/>
    </location>
</feature>
<feature type="binding site" evidence="4">
    <location>
        <begin position="34"/>
        <end position="42"/>
    </location>
    <ligand>
        <name>ATP</name>
        <dbReference type="ChEBI" id="CHEBI:30616"/>
    </ligand>
</feature>
<feature type="binding site" evidence="4">
    <location>
        <position position="57"/>
    </location>
    <ligand>
        <name>ATP</name>
        <dbReference type="ChEBI" id="CHEBI:30616"/>
    </ligand>
</feature>
<feature type="modified residue" description="Phosphoserine" evidence="9">
    <location>
        <position position="9"/>
    </location>
</feature>
<feature type="modified residue" description="Phosphoserine" evidence="2">
    <location>
        <position position="181"/>
    </location>
</feature>
<feature type="modified residue" description="Phosphoserine" evidence="2">
    <location>
        <position position="422"/>
    </location>
</feature>
<feature type="modified residue" description="Phosphoserine" evidence="9">
    <location>
        <position position="663"/>
    </location>
</feature>
<feature type="modified residue" description="Phosphoserine" evidence="2">
    <location>
        <position position="782"/>
    </location>
</feature>
<feature type="modified residue" description="Phosphoserine" evidence="2">
    <location>
        <position position="830"/>
    </location>
</feature>
<feature type="modified residue" description="Phosphoserine" evidence="2">
    <location>
        <position position="832"/>
    </location>
</feature>
<feature type="splice variant" id="VSP_040543" description="In isoform 2." evidence="7">
    <original>VRAGQLPMGLPATGALGPLSTGTPSEEQPCSSGQEAILDQRMLGEEEEAVPERRILGKEGTTLEPEEQRILGEEMGTFSSSPQKHRSLANEEDWDISEEMKEIRVPSLASQERNIIGQEEAAAWSLWEKEGGNLVDVEFKLGWVQGPVLTPVPEEEEEEEEEGGAPIGTHRDPGDGCPSPDIPPEPPPSHLRQYPTSQLPGLLSHGLLAGLSFAVGSSSGLLPLLLLLLLPLLAAQGGGGLQAALLALEVGLVGLGASYLFLCTALHLPPGLFLLLAQGTALLAVLSLSWRRGLMGVPLGLGAA</original>
    <variation>SKELQIKKQFQETCKIQTRQYKALRAHLLETTPKAQHKSLLKRLKEEQTRKLAILAEQYDQSISEMLSSQALRLDETQEAEFQALRQQLQQELELLNAYQSKIKIRTESQHERELRELEQRVALRRALLEQRVEEELLALQTGRSERIRSLLERQAREIEAFDAESMRLGFSSMALGGIPAEAAAQGYPAPPPAPAWPSRPVPRSGAHWSHGPPPPGMPPPAWRQPALLAPPGPPNWLGPPTQSGTPRGGALLLLRNSPQPLRRAASGGSSGENVGPPAAVPGPLSRSTSVASHILNGSSHFYS</variation>
    <location>
        <begin position="752"/>
        <end position="1055"/>
    </location>
</feature>
<feature type="splice variant" id="VSP_040544" description="In isoform 2." evidence="7">
    <location>
        <begin position="1056"/>
        <end position="1240"/>
    </location>
</feature>
<feature type="modified residue" description="Omega-N-methylarginine" evidence="10">
    <location sequence="Q6ZQ29-2">
        <position position="999"/>
    </location>
</feature>
<feature type="modified residue" description="Phosphoserine" evidence="8">
    <location sequence="Q6ZQ29-2">
        <position position="1037"/>
    </location>
</feature>
<reference key="1">
    <citation type="journal article" date="2003" name="DNA Res.">
        <title>Prediction of the coding sequences of mouse homologues of KIAA gene: III. The complete nucleotide sequences of 500 mouse KIAA-homologous cDNAs identified by screening of terminal sequences of cDNA clones randomly sampled from size-fractionated libraries.</title>
        <authorList>
            <person name="Okazaki N."/>
            <person name="Kikuno R."/>
            <person name="Ohara R."/>
            <person name="Inamoto S."/>
            <person name="Koseki H."/>
            <person name="Hiraoka S."/>
            <person name="Saga Y."/>
            <person name="Nagase T."/>
            <person name="Ohara O."/>
            <person name="Koga H."/>
        </authorList>
    </citation>
    <scope>NUCLEOTIDE SEQUENCE [LARGE SCALE MRNA] (ISOFORM 2)</scope>
    <source>
        <tissue>Embryonic tail</tissue>
    </source>
</reference>
<reference key="2">
    <citation type="journal article" date="2004" name="Genome Res.">
        <title>The status, quality, and expansion of the NIH full-length cDNA project: the Mammalian Gene Collection (MGC).</title>
        <authorList>
            <consortium name="The MGC Project Team"/>
        </authorList>
    </citation>
    <scope>NUCLEOTIDE SEQUENCE [LARGE SCALE MRNA] (ISOFORM 1)</scope>
    <source>
        <strain>C57BL/6J</strain>
        <strain>Czech II</strain>
        <tissue>Brain</tissue>
        <tissue>Lung</tissue>
    </source>
</reference>
<reference key="3">
    <citation type="journal article" date="2010" name="Cell">
        <title>A tissue-specific atlas of mouse protein phosphorylation and expression.</title>
        <authorList>
            <person name="Huttlin E.L."/>
            <person name="Jedrychowski M.P."/>
            <person name="Elias J.E."/>
            <person name="Goswami T."/>
            <person name="Rad R."/>
            <person name="Beausoleil S.A."/>
            <person name="Villen J."/>
            <person name="Haas W."/>
            <person name="Sowa M.E."/>
            <person name="Gygi S.P."/>
        </authorList>
    </citation>
    <scope>PHOSPHORYLATION [LARGE SCALE ANALYSIS] AT SER-9 AND SER-663</scope>
    <scope>IDENTIFICATION BY MASS SPECTROMETRY [LARGE SCALE ANALYSIS]</scope>
    <source>
        <tissue>Brain</tissue>
        <tissue>Lung</tissue>
        <tissue>Spleen</tissue>
    </source>
</reference>
<reference key="4">
    <citation type="journal article" date="2014" name="Mol. Cell. Proteomics">
        <title>Immunoaffinity enrichment and mass spectrometry analysis of protein methylation.</title>
        <authorList>
            <person name="Guo A."/>
            <person name="Gu H."/>
            <person name="Zhou J."/>
            <person name="Mulhern D."/>
            <person name="Wang Y."/>
            <person name="Lee K.A."/>
            <person name="Yang V."/>
            <person name="Aguiar M."/>
            <person name="Kornhauser J."/>
            <person name="Jia X."/>
            <person name="Ren J."/>
            <person name="Beausoleil S.A."/>
            <person name="Silva J.C."/>
            <person name="Vemulapalli V."/>
            <person name="Bedford M.T."/>
            <person name="Comb M.J."/>
        </authorList>
    </citation>
    <scope>METHYLATION [LARGE SCALE ANALYSIS] AT ARG-999 (ISOFORM 2)</scope>
    <scope>IDENTIFICATION BY MASS SPECTROMETRY [LARGE SCALE ANALYSIS]</scope>
    <source>
        <tissue>Brain</tissue>
        <tissue>Embryo</tissue>
    </source>
</reference>
<dbReference type="EC" id="2.7.11.1"/>
<dbReference type="EMBL" id="AK129235">
    <property type="protein sequence ID" value="BAC98045.1"/>
    <property type="status" value="ALT_INIT"/>
    <property type="molecule type" value="mRNA"/>
</dbReference>
<dbReference type="EMBL" id="BC052933">
    <property type="protein sequence ID" value="AAH52933.1"/>
    <property type="status" value="ALT_SEQ"/>
    <property type="molecule type" value="mRNA"/>
</dbReference>
<dbReference type="EMBL" id="BC085152">
    <property type="status" value="NOT_ANNOTATED_CDS"/>
    <property type="molecule type" value="mRNA"/>
</dbReference>
<dbReference type="CCDS" id="CCDS52403.1">
    <molecule id="Q6ZQ29-1"/>
</dbReference>
<dbReference type="CCDS" id="CCDS52404.1">
    <molecule id="Q6ZQ29-2"/>
</dbReference>
<dbReference type="RefSeq" id="NP_001157246.1">
    <molecule id="Q6ZQ29-2"/>
    <property type="nucleotide sequence ID" value="NM_001163774.2"/>
</dbReference>
<dbReference type="RefSeq" id="NP_001157247.1">
    <molecule id="Q6ZQ29-1"/>
    <property type="nucleotide sequence ID" value="NM_001163775.2"/>
</dbReference>
<dbReference type="RefSeq" id="XP_030098581.1">
    <molecule id="Q6ZQ29-2"/>
    <property type="nucleotide sequence ID" value="XM_030242721.2"/>
</dbReference>
<dbReference type="SMR" id="Q6ZQ29"/>
<dbReference type="BioGRID" id="238152">
    <property type="interactions" value="97"/>
</dbReference>
<dbReference type="FunCoup" id="Q6ZQ29">
    <property type="interactions" value="2739"/>
</dbReference>
<dbReference type="IntAct" id="Q6ZQ29">
    <property type="interactions" value="8"/>
</dbReference>
<dbReference type="STRING" id="10090.ENSMUSP00000112963"/>
<dbReference type="iPTMnet" id="Q6ZQ29"/>
<dbReference type="PhosphoSitePlus" id="Q6ZQ29"/>
<dbReference type="jPOST" id="Q6ZQ29"/>
<dbReference type="PaxDb" id="10090-ENSMUSP00000112963"/>
<dbReference type="PeptideAtlas" id="Q6ZQ29"/>
<dbReference type="ProteomicsDB" id="263066">
    <molecule id="Q6ZQ29-1"/>
</dbReference>
<dbReference type="ProteomicsDB" id="263067">
    <molecule id="Q6ZQ29-2"/>
</dbReference>
<dbReference type="Pumba" id="Q6ZQ29"/>
<dbReference type="Antibodypedia" id="2082">
    <property type="antibodies" value="229 antibodies from 36 providers"/>
</dbReference>
<dbReference type="Ensembl" id="ENSMUST00000071268.11">
    <molecule id="Q6ZQ29-2"/>
    <property type="protein sequence ID" value="ENSMUSP00000071246.5"/>
    <property type="gene ID" value="ENSMUSG00000059981.13"/>
</dbReference>
<dbReference type="Ensembl" id="ENSMUST00000117394.2">
    <molecule id="Q6ZQ29-1"/>
    <property type="protein sequence ID" value="ENSMUSP00000112963.2"/>
    <property type="gene ID" value="ENSMUSG00000059981.13"/>
</dbReference>
<dbReference type="GeneID" id="381921"/>
<dbReference type="KEGG" id="mmu:381921"/>
<dbReference type="UCSC" id="uc009jtg.2">
    <molecule id="Q6ZQ29-2"/>
    <property type="organism name" value="mouse"/>
</dbReference>
<dbReference type="UCSC" id="uc009jth.2">
    <molecule id="Q6ZQ29-1"/>
    <property type="organism name" value="mouse"/>
</dbReference>
<dbReference type="AGR" id="MGI:1915919"/>
<dbReference type="CTD" id="9344"/>
<dbReference type="MGI" id="MGI:1915919">
    <property type="gene designation" value="Taok2"/>
</dbReference>
<dbReference type="VEuPathDB" id="HostDB:ENSMUSG00000059981"/>
<dbReference type="eggNOG" id="KOG0577">
    <property type="taxonomic scope" value="Eukaryota"/>
</dbReference>
<dbReference type="GeneTree" id="ENSGT00940000159991"/>
<dbReference type="HOGENOM" id="CLU_000288_2_2_1"/>
<dbReference type="InParanoid" id="Q6ZQ29"/>
<dbReference type="OMA" id="NQMDYNK"/>
<dbReference type="OrthoDB" id="10016527at2759"/>
<dbReference type="PhylomeDB" id="Q6ZQ29"/>
<dbReference type="TreeFam" id="TF351444"/>
<dbReference type="BioGRID-ORCS" id="381921">
    <property type="hits" value="8 hits in 66 CRISPR screens"/>
</dbReference>
<dbReference type="CD-CODE" id="CE726F99">
    <property type="entry name" value="Postsynaptic density"/>
</dbReference>
<dbReference type="ChiTaRS" id="Taok2">
    <property type="organism name" value="mouse"/>
</dbReference>
<dbReference type="PRO" id="PR:Q6ZQ29"/>
<dbReference type="Proteomes" id="UP000000589">
    <property type="component" value="Chromosome 7"/>
</dbReference>
<dbReference type="RNAct" id="Q6ZQ29">
    <property type="molecule type" value="protein"/>
</dbReference>
<dbReference type="Bgee" id="ENSMUSG00000059981">
    <property type="expression patterns" value="Expressed in embryonic brain and 193 other cell types or tissues"/>
</dbReference>
<dbReference type="ExpressionAtlas" id="Q6ZQ29">
    <property type="expression patterns" value="baseline and differential"/>
</dbReference>
<dbReference type="GO" id="GO:0030424">
    <property type="term" value="C:axon"/>
    <property type="evidence" value="ECO:0000314"/>
    <property type="project" value="ARUK-UCL"/>
</dbReference>
<dbReference type="GO" id="GO:0044295">
    <property type="term" value="C:axonal growth cone"/>
    <property type="evidence" value="ECO:0000314"/>
    <property type="project" value="ARUK-UCL"/>
</dbReference>
<dbReference type="GO" id="GO:0030659">
    <property type="term" value="C:cytoplasmic vesicle membrane"/>
    <property type="evidence" value="ECO:0007669"/>
    <property type="project" value="UniProtKB-SubCell"/>
</dbReference>
<dbReference type="GO" id="GO:0005856">
    <property type="term" value="C:cytoskeleton"/>
    <property type="evidence" value="ECO:0007669"/>
    <property type="project" value="UniProtKB-SubCell"/>
</dbReference>
<dbReference type="GO" id="GO:0005829">
    <property type="term" value="C:cytosol"/>
    <property type="evidence" value="ECO:0007669"/>
    <property type="project" value="Ensembl"/>
</dbReference>
<dbReference type="GO" id="GO:0044294">
    <property type="term" value="C:dendritic growth cone"/>
    <property type="evidence" value="ECO:0000314"/>
    <property type="project" value="ARUK-UCL"/>
</dbReference>
<dbReference type="GO" id="GO:0043005">
    <property type="term" value="C:neuron projection"/>
    <property type="evidence" value="ECO:0000314"/>
    <property type="project" value="ARUK-UCL"/>
</dbReference>
<dbReference type="GO" id="GO:0005730">
    <property type="term" value="C:nucleolus"/>
    <property type="evidence" value="ECO:0007669"/>
    <property type="project" value="Ensembl"/>
</dbReference>
<dbReference type="GO" id="GO:0005654">
    <property type="term" value="C:nucleoplasm"/>
    <property type="evidence" value="ECO:0007669"/>
    <property type="project" value="Ensembl"/>
</dbReference>
<dbReference type="GO" id="GO:0043235">
    <property type="term" value="C:receptor complex"/>
    <property type="evidence" value="ECO:0000266"/>
    <property type="project" value="MGI"/>
</dbReference>
<dbReference type="GO" id="GO:0005524">
    <property type="term" value="F:ATP binding"/>
    <property type="evidence" value="ECO:0007669"/>
    <property type="project" value="UniProtKB-KW"/>
</dbReference>
<dbReference type="GO" id="GO:0031434">
    <property type="term" value="F:mitogen-activated protein kinase kinase binding"/>
    <property type="evidence" value="ECO:0007669"/>
    <property type="project" value="Ensembl"/>
</dbReference>
<dbReference type="GO" id="GO:0038191">
    <property type="term" value="F:neuropilin binding"/>
    <property type="evidence" value="ECO:0000353"/>
    <property type="project" value="ARUK-UCL"/>
</dbReference>
<dbReference type="GO" id="GO:0106310">
    <property type="term" value="F:protein serine kinase activity"/>
    <property type="evidence" value="ECO:0007669"/>
    <property type="project" value="RHEA"/>
</dbReference>
<dbReference type="GO" id="GO:0004674">
    <property type="term" value="F:protein serine/threonine kinase activity"/>
    <property type="evidence" value="ECO:0000250"/>
    <property type="project" value="UniProtKB"/>
</dbReference>
<dbReference type="GO" id="GO:0030036">
    <property type="term" value="P:actin cytoskeleton organization"/>
    <property type="evidence" value="ECO:0007669"/>
    <property type="project" value="Ensembl"/>
</dbReference>
<dbReference type="GO" id="GO:0007409">
    <property type="term" value="P:axonogenesis"/>
    <property type="evidence" value="ECO:0000315"/>
    <property type="project" value="ARUK-UCL"/>
</dbReference>
<dbReference type="GO" id="GO:0150020">
    <property type="term" value="P:basal dendrite arborization"/>
    <property type="evidence" value="ECO:0000314"/>
    <property type="project" value="ARUK-UCL"/>
</dbReference>
<dbReference type="GO" id="GO:0150019">
    <property type="term" value="P:basal dendrite morphogenesis"/>
    <property type="evidence" value="ECO:0000315"/>
    <property type="project" value="ARUK-UCL"/>
</dbReference>
<dbReference type="GO" id="GO:0006974">
    <property type="term" value="P:DNA damage response"/>
    <property type="evidence" value="ECO:0000250"/>
    <property type="project" value="UniProtKB"/>
</dbReference>
<dbReference type="GO" id="GO:0048041">
    <property type="term" value="P:focal adhesion assembly"/>
    <property type="evidence" value="ECO:0007669"/>
    <property type="project" value="Ensembl"/>
</dbReference>
<dbReference type="GO" id="GO:0007095">
    <property type="term" value="P:mitotic G2 DNA damage checkpoint signaling"/>
    <property type="evidence" value="ECO:0000250"/>
    <property type="project" value="UniProtKB"/>
</dbReference>
<dbReference type="GO" id="GO:0046330">
    <property type="term" value="P:positive regulation of JNK cascade"/>
    <property type="evidence" value="ECO:0000315"/>
    <property type="project" value="ARUK-UCL"/>
</dbReference>
<dbReference type="GO" id="GO:0032874">
    <property type="term" value="P:positive regulation of stress-activated MAPK cascade"/>
    <property type="evidence" value="ECO:0000250"/>
    <property type="project" value="UniProtKB"/>
</dbReference>
<dbReference type="GO" id="GO:0032956">
    <property type="term" value="P:regulation of actin cytoskeleton organization"/>
    <property type="evidence" value="ECO:0000314"/>
    <property type="project" value="ARUK-UCL"/>
</dbReference>
<dbReference type="GO" id="GO:0008360">
    <property type="term" value="P:regulation of cell shape"/>
    <property type="evidence" value="ECO:0007669"/>
    <property type="project" value="Ensembl"/>
</dbReference>
<dbReference type="GO" id="GO:0051403">
    <property type="term" value="P:stress-activated MAPK cascade"/>
    <property type="evidence" value="ECO:0000250"/>
    <property type="project" value="UniProtKB"/>
</dbReference>
<dbReference type="CDD" id="cd06634">
    <property type="entry name" value="STKc_TAO2"/>
    <property type="match status" value="1"/>
</dbReference>
<dbReference type="FunFam" id="1.10.510.10:FF:001615">
    <property type="entry name" value="Serine/threonine-protein kinase TAO2"/>
    <property type="match status" value="1"/>
</dbReference>
<dbReference type="FunFam" id="3.30.200.20:FF:000029">
    <property type="entry name" value="Serine/threonine-protein kinase TAO2, putative"/>
    <property type="match status" value="1"/>
</dbReference>
<dbReference type="Gene3D" id="3.30.200.20">
    <property type="entry name" value="Phosphorylase Kinase, domain 1"/>
    <property type="match status" value="1"/>
</dbReference>
<dbReference type="Gene3D" id="1.10.510.10">
    <property type="entry name" value="Transferase(Phosphotransferase) domain 1"/>
    <property type="match status" value="1"/>
</dbReference>
<dbReference type="InterPro" id="IPR011009">
    <property type="entry name" value="Kinase-like_dom_sf"/>
</dbReference>
<dbReference type="InterPro" id="IPR000719">
    <property type="entry name" value="Prot_kinase_dom"/>
</dbReference>
<dbReference type="InterPro" id="IPR017441">
    <property type="entry name" value="Protein_kinase_ATP_BS"/>
</dbReference>
<dbReference type="InterPro" id="IPR008271">
    <property type="entry name" value="Ser/Thr_kinase_AS"/>
</dbReference>
<dbReference type="InterPro" id="IPR051234">
    <property type="entry name" value="TAO_STE20_kinase"/>
</dbReference>
<dbReference type="PANTHER" id="PTHR47167">
    <property type="entry name" value="SERINE/THREONINE-PROTEIN KINASE TAO1-LIKE PROTEIN"/>
    <property type="match status" value="1"/>
</dbReference>
<dbReference type="PANTHER" id="PTHR47167:SF6">
    <property type="entry name" value="SERINE_THREONINE-PROTEIN KINASE TAO2"/>
    <property type="match status" value="1"/>
</dbReference>
<dbReference type="Pfam" id="PF00069">
    <property type="entry name" value="Pkinase"/>
    <property type="match status" value="1"/>
</dbReference>
<dbReference type="SMART" id="SM00220">
    <property type="entry name" value="S_TKc"/>
    <property type="match status" value="1"/>
</dbReference>
<dbReference type="SUPFAM" id="SSF56112">
    <property type="entry name" value="Protein kinase-like (PK-like)"/>
    <property type="match status" value="1"/>
</dbReference>
<dbReference type="PROSITE" id="PS00107">
    <property type="entry name" value="PROTEIN_KINASE_ATP"/>
    <property type="match status" value="1"/>
</dbReference>
<dbReference type="PROSITE" id="PS50011">
    <property type="entry name" value="PROTEIN_KINASE_DOM"/>
    <property type="match status" value="1"/>
</dbReference>
<dbReference type="PROSITE" id="PS00108">
    <property type="entry name" value="PROTEIN_KINASE_ST"/>
    <property type="match status" value="1"/>
</dbReference>
<proteinExistence type="evidence at protein level"/>
<organism>
    <name type="scientific">Mus musculus</name>
    <name type="common">Mouse</name>
    <dbReference type="NCBI Taxonomy" id="10090"/>
    <lineage>
        <taxon>Eukaryota</taxon>
        <taxon>Metazoa</taxon>
        <taxon>Chordata</taxon>
        <taxon>Craniata</taxon>
        <taxon>Vertebrata</taxon>
        <taxon>Euteleostomi</taxon>
        <taxon>Mammalia</taxon>
        <taxon>Eutheria</taxon>
        <taxon>Euarchontoglires</taxon>
        <taxon>Glires</taxon>
        <taxon>Rodentia</taxon>
        <taxon>Myomorpha</taxon>
        <taxon>Muroidea</taxon>
        <taxon>Muridae</taxon>
        <taxon>Murinae</taxon>
        <taxon>Mus</taxon>
        <taxon>Mus</taxon>
    </lineage>
</organism>
<accession>Q6ZQ29</accession>
<accession>Q7TSS8</accession>
<protein>
    <recommendedName>
        <fullName>Serine/threonine-protein kinase TAO2</fullName>
        <ecNumber>2.7.11.1</ecNumber>
    </recommendedName>
    <alternativeName>
        <fullName>Thousand and one amino acid protein 2</fullName>
    </alternativeName>
</protein>